<protein>
    <recommendedName>
        <fullName>Serine/threonine-protein kinase pak-1</fullName>
        <ecNumber evidence="10">2.7.11.1</ecNumber>
    </recommendedName>
    <alternativeName>
        <fullName>CePAK</fullName>
    </alternativeName>
    <alternativeName>
        <fullName>p21-activated kinase 1</fullName>
        <shortName>PAK1</shortName>
    </alternativeName>
</protein>
<reference evidence="13 15" key="1">
    <citation type="journal article" date="1996" name="J. Biol. Chem.">
        <title>The Caenorhabditis elegans p21-activated kinase (CePAK) colocalizes with CeRac1 and CDC42Ce at hypodermal cell boundaries during embryo elongation.</title>
        <authorList>
            <person name="Chen W."/>
            <person name="Chen S."/>
            <person name="Yap S.F."/>
            <person name="Lim L."/>
        </authorList>
    </citation>
    <scope>NUCLEOTIDE SEQUENCE [MRNA] (ISOFORM A)</scope>
    <scope>FUNCTION</scope>
    <scope>CATALYTIC ACTIVITY</scope>
    <scope>COFACTOR</scope>
    <scope>INTERACTION WITH CDC-42 AND CED-10</scope>
    <scope>SUBCELLULAR LOCATION</scope>
    <scope>TISSUE SPECIFICITY</scope>
    <scope>DEVELOPMENTAL STAGE</scope>
    <source>
        <strain evidence="15">Bristol N2</strain>
        <tissue evidence="10">Embryo</tissue>
    </source>
</reference>
<reference evidence="13 16" key="2">
    <citation type="journal article" date="1998" name="Biochem. Biophys. Res. Commun.">
        <title>Expression pattern of the C. elegans p21-activated protein kinase, CePAK.</title>
        <authorList>
            <person name="Iino Y."/>
            <person name="Yamamoto M."/>
        </authorList>
    </citation>
    <scope>NUCLEOTIDE SEQUENCE [MRNA] (ISOFORM B)</scope>
    <scope>SUBCELLULAR LOCATION</scope>
    <scope>TISSUE SPECIFICITY</scope>
    <source>
        <strain evidence="16">Bristol N2</strain>
        <tissue>Embryo</tissue>
    </source>
</reference>
<reference key="3">
    <citation type="journal article" date="1998" name="Science">
        <title>Genome sequence of the nematode C. elegans: a platform for investigating biology.</title>
        <authorList>
            <consortium name="The C. elegans sequencing consortium"/>
        </authorList>
    </citation>
    <scope>NUCLEOTIDE SEQUENCE [LARGE SCALE GENOMIC DNA]</scope>
    <scope>ALTERNATIVE SPLICING</scope>
    <source>
        <strain>Bristol N2</strain>
    </source>
</reference>
<reference key="4">
    <citation type="journal article" date="2006" name="Development">
        <title>The Caenorhabditis elegans P21-activated kinases are differentially required for UNC-6/netrin-mediated commissural motor axon guidance.</title>
        <authorList>
            <person name="Lucanic M."/>
            <person name="Kiley M."/>
            <person name="Ashcroft N."/>
            <person name="L'Etoile N."/>
            <person name="Cheng H.J."/>
        </authorList>
    </citation>
    <scope>FUNCTION</scope>
    <scope>TISSUE SPECIFICITY</scope>
    <scope>DISRUPTION PHENOTYPE</scope>
</reference>
<reference key="5">
    <citation type="journal article" date="2008" name="Curr. Biol.">
        <title>CED-10/Rac1 mediates axon guidance by regulating the asymmetric distribution of MIG-10/lamellipodin.</title>
        <authorList>
            <person name="Quinn C.C."/>
            <person name="Pfeil D.S."/>
            <person name="Wadsworth W.G."/>
        </authorList>
    </citation>
    <scope>FUNCTION</scope>
</reference>
<reference key="6">
    <citation type="journal article" date="2008" name="PLoS Genet.">
        <title>A RAC/CDC-42-independent GIT/PIX/PAK signaling pathway mediates cell migration in C. elegans.</title>
        <authorList>
            <person name="Lucanic M."/>
            <person name="Cheng H.J."/>
        </authorList>
    </citation>
    <scope>FUNCTION</scope>
    <scope>SUBCELLULAR LOCATION</scope>
    <scope>TISSUE SPECIFICITY</scope>
    <scope>DISRUPTION PHENOTYPE</scope>
    <scope>MUTAGENESIS OF SER-68</scope>
</reference>
<reference key="7">
    <citation type="journal article" date="2009" name="Development">
        <title>Myosin II regulation during C. elegans embryonic elongation: LET-502/ROCK, MRCK-1 and PAK-1, three kinases with different roles.</title>
        <authorList>
            <person name="Gally C."/>
            <person name="Wissler F."/>
            <person name="Zahreddine H."/>
            <person name="Quintin S."/>
            <person name="Landmann F."/>
            <person name="Labouesse M."/>
        </authorList>
    </citation>
    <scope>FUNCTION</scope>
</reference>
<reference key="8">
    <citation type="journal article" date="2009" name="Genetics">
        <title>Pharmacogenetic analysis reveals a post-developmental role for Rac GTPases in Caenorhabditis elegans GABAergic neurotransmission.</title>
        <authorList>
            <person name="Locke C.J."/>
            <person name="Kautu B.B."/>
            <person name="Berry K.P."/>
            <person name="Lee S.K."/>
            <person name="Caldwell K.A."/>
            <person name="Caldwell G.A."/>
        </authorList>
    </citation>
    <scope>FUNCTION</scope>
    <scope>MUTAGENESIS OF 234-ARG-PRO-235 AND LYS-324</scope>
</reference>
<feature type="chain" id="PRO_0000086463" description="Serine/threonine-protein kinase pak-1">
    <location>
        <begin position="1"/>
        <end position="572"/>
    </location>
</feature>
<feature type="domain" description="CRIB" evidence="2">
    <location>
        <begin position="67"/>
        <end position="80"/>
    </location>
</feature>
<feature type="domain" description="Protein kinase" evidence="3">
    <location>
        <begin position="295"/>
        <end position="546"/>
    </location>
</feature>
<feature type="region of interest" description="Disordered" evidence="5">
    <location>
        <begin position="1"/>
        <end position="71"/>
    </location>
</feature>
<feature type="region of interest" description="Linker">
    <location>
        <begin position="81"/>
        <end position="294"/>
    </location>
</feature>
<feature type="region of interest" description="Disordered" evidence="5">
    <location>
        <begin position="156"/>
        <end position="195"/>
    </location>
</feature>
<feature type="compositionally biased region" description="Polar residues" evidence="5">
    <location>
        <begin position="178"/>
        <end position="195"/>
    </location>
</feature>
<feature type="active site" description="Proton acceptor" evidence="1 3 4">
    <location>
        <position position="414"/>
    </location>
</feature>
<feature type="binding site" evidence="1 3">
    <location>
        <begin position="301"/>
        <end position="309"/>
    </location>
    <ligand>
        <name>ATP</name>
        <dbReference type="ChEBI" id="CHEBI:30616"/>
    </ligand>
</feature>
<feature type="binding site" evidence="1 3">
    <location>
        <position position="324"/>
    </location>
    <ligand>
        <name>ATP</name>
        <dbReference type="ChEBI" id="CHEBI:30616"/>
    </ligand>
</feature>
<feature type="splice variant" id="VSP_051593" description="In isoform c." evidence="13">
    <location>
        <begin position="1"/>
        <end position="46"/>
    </location>
</feature>
<feature type="splice variant" id="VSP_051596" description="In isoform b and isoform c." evidence="12">
    <location>
        <begin position="139"/>
        <end position="141"/>
    </location>
</feature>
<feature type="splice variant" id="VSP_042128" description="In isoform b." evidence="12">
    <original>D</original>
    <variation>N</variation>
    <location>
        <position position="142"/>
    </location>
</feature>
<feature type="mutagenesis site" description="May prevent interaction with Rho GTPases. Defect in commissural axon guidance in ventral motoneurons in an RNAi-mediated max-2 knockdown background. Rescues anterior gonad morphology defects in pax-1 ok488 mutants." evidence="8">
    <original>S</original>
    <variation>P</variation>
    <location>
        <position position="68"/>
    </location>
</feature>
<feature type="mutagenesis site" description="May prevent interaction with pix-1. Fails to rescue distal tip cell migration defect in an RNAi-mediated max-2 knockdown background." evidence="9">
    <original>RP</original>
    <variation>AA</variation>
    <location>
        <begin position="234"/>
        <end position="235"/>
    </location>
</feature>
<feature type="mutagenesis site" description="Probable loss of activity. Fails to rescue distal tip cell migration defect in an RNAi-mediated max-2 knockdown background." evidence="9">
    <original>K</original>
    <variation>R</variation>
    <location>
        <position position="324"/>
    </location>
</feature>
<feature type="sequence conflict" description="In Ref. 1; AAC47308." evidence="13" ref="1">
    <original>F</original>
    <variation>L</variation>
    <location>
        <position position="435"/>
    </location>
</feature>
<comment type="function">
    <text evidence="6 7 8 9 10 14">Required for hypodermal cell fusion, together with cdc-42 and ced-10, leading to embryonic body elongation, which involves dramatic cytoskeletal reorganization (PubMed:8824291). Plays a redundant role with max-2 in dorsal axonal guidance in ventral cord commissural motoneurons and in P neuroblast migration. Acts probably downstream of Rho GTPases mig-2 and ced-10 to regulate these 2 processes (PubMed:17050621). Involved in orientating axonal growth of HSN neurons (PubMed:18499456). During gonad morphogenesis and probably in association with pix-1 and git-1, involved in the migration of distal tip cell (DTC) and in maintaining their sharp tapering morphology. In addition, plays a redundant role with max-2 in DTC-mediated guidance of gonad elongation (PubMed:19023419, PubMed:19797046). May phosphorylate mlc-4 (PubMed:19675126).</text>
</comment>
<comment type="catalytic activity">
    <reaction evidence="10">
        <text>L-seryl-[protein] + ATP = O-phospho-L-seryl-[protein] + ADP + H(+)</text>
        <dbReference type="Rhea" id="RHEA:17989"/>
        <dbReference type="Rhea" id="RHEA-COMP:9863"/>
        <dbReference type="Rhea" id="RHEA-COMP:11604"/>
        <dbReference type="ChEBI" id="CHEBI:15378"/>
        <dbReference type="ChEBI" id="CHEBI:29999"/>
        <dbReference type="ChEBI" id="CHEBI:30616"/>
        <dbReference type="ChEBI" id="CHEBI:83421"/>
        <dbReference type="ChEBI" id="CHEBI:456216"/>
        <dbReference type="EC" id="2.7.11.1"/>
    </reaction>
</comment>
<comment type="catalytic activity">
    <reaction evidence="10">
        <text>L-threonyl-[protein] + ATP = O-phospho-L-threonyl-[protein] + ADP + H(+)</text>
        <dbReference type="Rhea" id="RHEA:46608"/>
        <dbReference type="Rhea" id="RHEA-COMP:11060"/>
        <dbReference type="Rhea" id="RHEA-COMP:11605"/>
        <dbReference type="ChEBI" id="CHEBI:15378"/>
        <dbReference type="ChEBI" id="CHEBI:30013"/>
        <dbReference type="ChEBI" id="CHEBI:30616"/>
        <dbReference type="ChEBI" id="CHEBI:61977"/>
        <dbReference type="ChEBI" id="CHEBI:456216"/>
        <dbReference type="EC" id="2.7.11.1"/>
    </reaction>
</comment>
<comment type="cofactor">
    <cofactor evidence="10">
        <name>Mg(2+)</name>
        <dbReference type="ChEBI" id="CHEBI:18420"/>
    </cofactor>
    <cofactor evidence="10">
        <name>Mn(2+)</name>
        <dbReference type="ChEBI" id="CHEBI:29035"/>
    </cofactor>
    <text evidence="10">Divalent cations such as magnesium or manganese.</text>
</comment>
<comment type="subunit">
    <text evidence="10">Interacts with cdc-42 (GTP-bound form) and cedd-10 (GTP-bound form).</text>
</comment>
<comment type="subcellular location">
    <subcellularLocation>
        <location evidence="10 11">Cell membrane</location>
        <topology evidence="10 11">Peripheral membrane protein</topology>
    </subcellularLocation>
    <subcellularLocation>
        <location evidence="8">Cytoplasm</location>
    </subcellularLocation>
    <subcellularLocation>
        <location evidence="11">Cell projection</location>
        <location evidence="11">Axon</location>
    </subcellularLocation>
    <subcellularLocation>
        <location evidence="11">Perikaryon</location>
    </subcellularLocation>
    <text evidence="8 10 11">Co-localizes with ced-10/rac-1 and cdc-42 at hypodermal cell boundaries during embryo elongation (PubMed:8824291). Preferentially enriched at pharyngeal muscle cells boundaries (PubMed:9535804). In CAN neurons, detected in the cell bodies and along the axons (PubMed:9535804). Remains diffused in the cytoplasm during distal tip cell (DTC) migration (PubMed:19023419).</text>
</comment>
<comment type="alternative products">
    <event type="alternative splicing"/>
    <isoform>
        <id>Q17850-1</id>
        <name evidence="10">a</name>
        <sequence type="displayed"/>
    </isoform>
    <isoform>
        <id>Q17850-2</id>
        <name evidence="11">b</name>
        <sequence type="described" ref="VSP_051596 VSP_042128"/>
    </isoform>
    <isoform>
        <id>Q17850-3</id>
        <name>c</name>
        <sequence type="described" ref="VSP_051593 VSP_051596"/>
    </isoform>
</comment>
<comment type="tissue specificity">
    <text evidence="6 8 10 11">Specifically colocalized with cdc-42 and ced-10 at all hypodermal cell boundaries during embryo elongation throughout the second phase of embryogenesis. Expressed mainly in pharyngeal muscles, the CAN neurons, motor neurons in the ventral nerve cord, several cells in the tail region (including the B and Y cells from L1 to adult, the hypodermal blast cell T in the L1 and some of its progeny in later stages), and the distal tip cells.</text>
</comment>
<comment type="developmental stage">
    <text evidence="10">Highly expressed at the embryonic stage, with decreasing expression from L1 onwards.</text>
</comment>
<comment type="disruption phenotype">
    <text evidence="6 8">In pak-1 and pak-2 double mutants, defects in embryogenesis and L1 stage lethality. The few animals reaching adulthood have normal ventral cord commissural motoneuron axonal guidance and are relatively coordinated. In max-2 and pak-1 double mutants, DD and DC motoneuron axons fail to reach the dorsal cord (PubMed:17050621). Animals are also uncoordinated, defective in egg laying and in distal tip cell (DTC) migration, guidance and morphology, and exhibit ventral enclosure defects (PubMed:17050621, PubMed:19023419).</text>
</comment>
<comment type="similarity">
    <text evidence="13">Belongs to the protein kinase superfamily. STE Ser/Thr protein kinase family. STE20 subfamily.</text>
</comment>
<dbReference type="EC" id="2.7.11.1" evidence="10"/>
<dbReference type="EMBL" id="U63744">
    <property type="protein sequence ID" value="AAC47308.1"/>
    <property type="molecule type" value="mRNA"/>
</dbReference>
<dbReference type="EMBL" id="D83215">
    <property type="protein sequence ID" value="BAA11844.1"/>
    <property type="molecule type" value="mRNA"/>
</dbReference>
<dbReference type="EMBL" id="FO080450">
    <property type="protein sequence ID" value="CCD63804.1"/>
    <property type="molecule type" value="Genomic_DNA"/>
</dbReference>
<dbReference type="EMBL" id="FO080450">
    <property type="protein sequence ID" value="CCD63805.1"/>
    <property type="molecule type" value="Genomic_DNA"/>
</dbReference>
<dbReference type="EMBL" id="FO080450">
    <property type="protein sequence ID" value="CCD63806.1"/>
    <property type="molecule type" value="Genomic_DNA"/>
</dbReference>
<dbReference type="EMBL" id="FO080450">
    <property type="protein sequence ID" value="CCD63807.1"/>
    <property type="molecule type" value="Genomic_DNA"/>
</dbReference>
<dbReference type="PIR" id="T15467">
    <property type="entry name" value="T15467"/>
</dbReference>
<dbReference type="RefSeq" id="NP_001024377.1">
    <molecule id="Q17850-1"/>
    <property type="nucleotide sequence ID" value="NM_001029206.3"/>
</dbReference>
<dbReference type="RefSeq" id="NP_001024378.1">
    <molecule id="Q17850-2"/>
    <property type="nucleotide sequence ID" value="NM_001029207.4"/>
</dbReference>
<dbReference type="RefSeq" id="NP_001024379.1">
    <property type="nucleotide sequence ID" value="NM_001029208.3"/>
</dbReference>
<dbReference type="RefSeq" id="NP_001024380.1">
    <property type="nucleotide sequence ID" value="NM_001029209.3"/>
</dbReference>
<dbReference type="SMR" id="Q17850"/>
<dbReference type="BioGRID" id="45805">
    <property type="interactions" value="28"/>
</dbReference>
<dbReference type="DIP" id="DIP-26715N"/>
<dbReference type="FunCoup" id="Q17850">
    <property type="interactions" value="2266"/>
</dbReference>
<dbReference type="IntAct" id="Q17850">
    <property type="interactions" value="1"/>
</dbReference>
<dbReference type="STRING" id="6239.C09B8.7a.1"/>
<dbReference type="PaxDb" id="6239-C09B8.7a"/>
<dbReference type="PeptideAtlas" id="Q17850"/>
<dbReference type="EnsemblMetazoa" id="C09B8.7a.1">
    <molecule id="Q17850-1"/>
    <property type="protein sequence ID" value="C09B8.7a.1"/>
    <property type="gene ID" value="WBGene00003911"/>
</dbReference>
<dbReference type="EnsemblMetazoa" id="C09B8.7b.1">
    <molecule id="Q17850-2"/>
    <property type="protein sequence ID" value="C09B8.7b.1"/>
    <property type="gene ID" value="WBGene00003911"/>
</dbReference>
<dbReference type="EnsemblMetazoa" id="C09B8.7c.1">
    <property type="protein sequence ID" value="C09B8.7c.1"/>
    <property type="gene ID" value="WBGene00003911"/>
</dbReference>
<dbReference type="GeneID" id="180873"/>
<dbReference type="KEGG" id="cel:CELE_C09B8.7"/>
<dbReference type="UCSC" id="C09B8.7e.2">
    <molecule id="Q17850-1"/>
    <property type="organism name" value="c. elegans"/>
</dbReference>
<dbReference type="AGR" id="WB:WBGene00003911"/>
<dbReference type="CTD" id="180873"/>
<dbReference type="WormBase" id="C09B8.7a">
    <molecule id="Q17850-1"/>
    <property type="protein sequence ID" value="CE27670"/>
    <property type="gene ID" value="WBGene00003911"/>
    <property type="gene designation" value="pak-1"/>
</dbReference>
<dbReference type="WormBase" id="C09B8.7b">
    <molecule id="Q17850-2"/>
    <property type="protein sequence ID" value="CE06792"/>
    <property type="gene ID" value="WBGene00003911"/>
    <property type="gene designation" value="pak-1"/>
</dbReference>
<dbReference type="WormBase" id="C09B8.7c">
    <property type="protein sequence ID" value="CE33559"/>
    <property type="gene ID" value="WBGene00003911"/>
    <property type="gene designation" value="pak-1"/>
</dbReference>
<dbReference type="eggNOG" id="KOG0578">
    <property type="taxonomic scope" value="Eukaryota"/>
</dbReference>
<dbReference type="GeneTree" id="ENSGT00940000165560"/>
<dbReference type="InParanoid" id="Q17850"/>
<dbReference type="OMA" id="KKGMFTF"/>
<dbReference type="OrthoDB" id="1022360at2759"/>
<dbReference type="PhylomeDB" id="Q17850"/>
<dbReference type="Reactome" id="R-CEL-2029482">
    <property type="pathway name" value="Regulation of actin dynamics for phagocytic cup formation"/>
</dbReference>
<dbReference type="Reactome" id="R-CEL-389359">
    <property type="pathway name" value="CD28 dependent Vav1 pathway"/>
</dbReference>
<dbReference type="Reactome" id="R-CEL-3928662">
    <property type="pathway name" value="EPHB-mediated forward signaling"/>
</dbReference>
<dbReference type="Reactome" id="R-CEL-3928664">
    <property type="pathway name" value="Ephrin signaling"/>
</dbReference>
<dbReference type="Reactome" id="R-CEL-399954">
    <property type="pathway name" value="Sema3A PAK dependent Axon repulsion"/>
</dbReference>
<dbReference type="Reactome" id="R-CEL-4420097">
    <property type="pathway name" value="VEGFA-VEGFR2 Pathway"/>
</dbReference>
<dbReference type="Reactome" id="R-CEL-445144">
    <property type="pathway name" value="Signal transduction by L1"/>
</dbReference>
<dbReference type="Reactome" id="R-CEL-5218920">
    <property type="pathway name" value="VEGFR2 mediated vascular permeability"/>
</dbReference>
<dbReference type="Reactome" id="R-CEL-5621575">
    <property type="pathway name" value="CD209 (DC-SIGN) signaling"/>
</dbReference>
<dbReference type="Reactome" id="R-CEL-5627123">
    <property type="pathway name" value="RHO GTPases activate PAKs"/>
</dbReference>
<dbReference type="Reactome" id="R-CEL-5687128">
    <property type="pathway name" value="MAPK6/MAPK4 signaling"/>
</dbReference>
<dbReference type="Reactome" id="R-CEL-8964616">
    <property type="pathway name" value="G beta:gamma signalling through CDC42"/>
</dbReference>
<dbReference type="Reactome" id="R-CEL-9013149">
    <property type="pathway name" value="RAC1 GTPase cycle"/>
</dbReference>
<dbReference type="Reactome" id="R-CEL-9013404">
    <property type="pathway name" value="RAC2 GTPase cycle"/>
</dbReference>
<dbReference type="Reactome" id="R-CEL-9013406">
    <property type="pathway name" value="RHOQ GTPase cycle"/>
</dbReference>
<dbReference type="Reactome" id="R-CEL-9013407">
    <property type="pathway name" value="RHOH GTPase cycle"/>
</dbReference>
<dbReference type="Reactome" id="R-CEL-9013408">
    <property type="pathway name" value="RHOG GTPase cycle"/>
</dbReference>
<dbReference type="Reactome" id="R-CEL-9013420">
    <property type="pathway name" value="RHOU GTPase cycle"/>
</dbReference>
<dbReference type="Reactome" id="R-CEL-9013423">
    <property type="pathway name" value="RAC3 GTPase cycle"/>
</dbReference>
<dbReference type="Reactome" id="R-CEL-9013424">
    <property type="pathway name" value="RHOV GTPase cycle"/>
</dbReference>
<dbReference type="PRO" id="PR:Q17850"/>
<dbReference type="Proteomes" id="UP000001940">
    <property type="component" value="Chromosome X"/>
</dbReference>
<dbReference type="Bgee" id="WBGene00003911">
    <property type="expression patterns" value="Expressed in pharyngeal muscle cell (C elegans) and 9 other cell types or tissues"/>
</dbReference>
<dbReference type="GO" id="GO:0030424">
    <property type="term" value="C:axon"/>
    <property type="evidence" value="ECO:0000314"/>
    <property type="project" value="WormBase"/>
</dbReference>
<dbReference type="GO" id="GO:0005737">
    <property type="term" value="C:cytoplasm"/>
    <property type="evidence" value="ECO:0000318"/>
    <property type="project" value="GO_Central"/>
</dbReference>
<dbReference type="GO" id="GO:0005829">
    <property type="term" value="C:cytosol"/>
    <property type="evidence" value="ECO:0000314"/>
    <property type="project" value="WormBase"/>
</dbReference>
<dbReference type="GO" id="GO:0030056">
    <property type="term" value="C:hemidesmosome"/>
    <property type="evidence" value="ECO:0000314"/>
    <property type="project" value="WormBase"/>
</dbReference>
<dbReference type="GO" id="GO:0016020">
    <property type="term" value="C:membrane"/>
    <property type="evidence" value="ECO:0000314"/>
    <property type="project" value="UniProtKB"/>
</dbReference>
<dbReference type="GO" id="GO:0043025">
    <property type="term" value="C:neuronal cell body"/>
    <property type="evidence" value="ECO:0000314"/>
    <property type="project" value="WormBase"/>
</dbReference>
<dbReference type="GO" id="GO:0043204">
    <property type="term" value="C:perikaryon"/>
    <property type="evidence" value="ECO:0007669"/>
    <property type="project" value="UniProtKB-SubCell"/>
</dbReference>
<dbReference type="GO" id="GO:0005886">
    <property type="term" value="C:plasma membrane"/>
    <property type="evidence" value="ECO:0000314"/>
    <property type="project" value="WormBase"/>
</dbReference>
<dbReference type="GO" id="GO:0005524">
    <property type="term" value="F:ATP binding"/>
    <property type="evidence" value="ECO:0007669"/>
    <property type="project" value="UniProtKB-KW"/>
</dbReference>
<dbReference type="GO" id="GO:0005525">
    <property type="term" value="F:GTP binding"/>
    <property type="evidence" value="ECO:0000314"/>
    <property type="project" value="UniProtKB"/>
</dbReference>
<dbReference type="GO" id="GO:0004672">
    <property type="term" value="F:protein kinase activity"/>
    <property type="evidence" value="ECO:0000314"/>
    <property type="project" value="UniProtKB"/>
</dbReference>
<dbReference type="GO" id="GO:0106310">
    <property type="term" value="F:protein serine kinase activity"/>
    <property type="evidence" value="ECO:0007669"/>
    <property type="project" value="RHEA"/>
</dbReference>
<dbReference type="GO" id="GO:0004674">
    <property type="term" value="F:protein serine/threonine kinase activity"/>
    <property type="evidence" value="ECO:0000318"/>
    <property type="project" value="GO_Central"/>
</dbReference>
<dbReference type="GO" id="GO:0016477">
    <property type="term" value="P:cell migration"/>
    <property type="evidence" value="ECO:0000316"/>
    <property type="project" value="UniProtKB"/>
</dbReference>
<dbReference type="GO" id="GO:0009267">
    <property type="term" value="P:cellular response to starvation"/>
    <property type="evidence" value="ECO:0000318"/>
    <property type="project" value="GO_Central"/>
</dbReference>
<dbReference type="GO" id="GO:0010172">
    <property type="term" value="P:embryonic body morphogenesis"/>
    <property type="evidence" value="ECO:0000316"/>
    <property type="project" value="WormBase"/>
</dbReference>
<dbReference type="GO" id="GO:0048598">
    <property type="term" value="P:embryonic morphogenesis"/>
    <property type="evidence" value="ECO:0000316"/>
    <property type="project" value="WormBase"/>
</dbReference>
<dbReference type="GO" id="GO:0035262">
    <property type="term" value="P:gonad morphogenesis"/>
    <property type="evidence" value="ECO:0000315"/>
    <property type="project" value="WormBase"/>
</dbReference>
<dbReference type="GO" id="GO:0031581">
    <property type="term" value="P:hemidesmosome assembly"/>
    <property type="evidence" value="ECO:0000316"/>
    <property type="project" value="WormBase"/>
</dbReference>
<dbReference type="GO" id="GO:0040039">
    <property type="term" value="P:inductive cell migration"/>
    <property type="evidence" value="ECO:0000315"/>
    <property type="project" value="WormBase"/>
</dbReference>
<dbReference type="GO" id="GO:0035556">
    <property type="term" value="P:intracellular signal transduction"/>
    <property type="evidence" value="ECO:0000318"/>
    <property type="project" value="GO_Central"/>
</dbReference>
<dbReference type="GO" id="GO:0008045">
    <property type="term" value="P:motor neuron axon guidance"/>
    <property type="evidence" value="ECO:0000316"/>
    <property type="project" value="UniProtKB"/>
</dbReference>
<dbReference type="GO" id="GO:0002119">
    <property type="term" value="P:nematode larval development"/>
    <property type="evidence" value="ECO:0000315"/>
    <property type="project" value="WormBase"/>
</dbReference>
<dbReference type="GO" id="GO:0050770">
    <property type="term" value="P:regulation of axonogenesis"/>
    <property type="evidence" value="ECO:0000318"/>
    <property type="project" value="GO_Central"/>
</dbReference>
<dbReference type="GO" id="GO:0043408">
    <property type="term" value="P:regulation of MAPK cascade"/>
    <property type="evidence" value="ECO:0000318"/>
    <property type="project" value="GO_Central"/>
</dbReference>
<dbReference type="CDD" id="cd01093">
    <property type="entry name" value="CRIB_PAK_like"/>
    <property type="match status" value="1"/>
</dbReference>
<dbReference type="FunFam" id="1.10.510.10:FF:000011">
    <property type="entry name" value="Non-specific serine/threonine protein kinase"/>
    <property type="match status" value="1"/>
</dbReference>
<dbReference type="FunFam" id="3.30.200.20:FF:000385">
    <property type="entry name" value="Non-specific serine/threonine protein kinase"/>
    <property type="match status" value="1"/>
</dbReference>
<dbReference type="FunFam" id="3.90.810.10:FF:000005">
    <property type="entry name" value="Non-specific serine/threonine protein kinase"/>
    <property type="match status" value="1"/>
</dbReference>
<dbReference type="Gene3D" id="3.90.810.10">
    <property type="entry name" value="CRIB domain"/>
    <property type="match status" value="1"/>
</dbReference>
<dbReference type="Gene3D" id="3.30.200.20">
    <property type="entry name" value="Phosphorylase Kinase, domain 1"/>
    <property type="match status" value="1"/>
</dbReference>
<dbReference type="Gene3D" id="1.10.510.10">
    <property type="entry name" value="Transferase(Phosphotransferase) domain 1"/>
    <property type="match status" value="1"/>
</dbReference>
<dbReference type="InterPro" id="IPR000095">
    <property type="entry name" value="CRIB_dom"/>
</dbReference>
<dbReference type="InterPro" id="IPR036936">
    <property type="entry name" value="CRIB_dom_sf"/>
</dbReference>
<dbReference type="InterPro" id="IPR011009">
    <property type="entry name" value="Kinase-like_dom_sf"/>
</dbReference>
<dbReference type="InterPro" id="IPR051931">
    <property type="entry name" value="PAK3-like"/>
</dbReference>
<dbReference type="InterPro" id="IPR033923">
    <property type="entry name" value="PAK_BD"/>
</dbReference>
<dbReference type="InterPro" id="IPR000719">
    <property type="entry name" value="Prot_kinase_dom"/>
</dbReference>
<dbReference type="InterPro" id="IPR017441">
    <property type="entry name" value="Protein_kinase_ATP_BS"/>
</dbReference>
<dbReference type="InterPro" id="IPR008271">
    <property type="entry name" value="Ser/Thr_kinase_AS"/>
</dbReference>
<dbReference type="PANTHER" id="PTHR45832">
    <property type="entry name" value="SERINE/THREONINE-PROTEIN KINASE SAMKA-RELATED-RELATED"/>
    <property type="match status" value="1"/>
</dbReference>
<dbReference type="PANTHER" id="PTHR45832:SF22">
    <property type="entry name" value="SERINE_THREONINE-PROTEIN KINASE SAMKA-RELATED"/>
    <property type="match status" value="1"/>
</dbReference>
<dbReference type="Pfam" id="PF00786">
    <property type="entry name" value="PBD"/>
    <property type="match status" value="1"/>
</dbReference>
<dbReference type="Pfam" id="PF00069">
    <property type="entry name" value="Pkinase"/>
    <property type="match status" value="1"/>
</dbReference>
<dbReference type="SMART" id="SM00285">
    <property type="entry name" value="PBD"/>
    <property type="match status" value="1"/>
</dbReference>
<dbReference type="SMART" id="SM00220">
    <property type="entry name" value="S_TKc"/>
    <property type="match status" value="1"/>
</dbReference>
<dbReference type="SUPFAM" id="SSF56112">
    <property type="entry name" value="Protein kinase-like (PK-like)"/>
    <property type="match status" value="1"/>
</dbReference>
<dbReference type="PROSITE" id="PS50108">
    <property type="entry name" value="CRIB"/>
    <property type="match status" value="1"/>
</dbReference>
<dbReference type="PROSITE" id="PS00107">
    <property type="entry name" value="PROTEIN_KINASE_ATP"/>
    <property type="match status" value="1"/>
</dbReference>
<dbReference type="PROSITE" id="PS50011">
    <property type="entry name" value="PROTEIN_KINASE_DOM"/>
    <property type="match status" value="1"/>
</dbReference>
<dbReference type="PROSITE" id="PS00108">
    <property type="entry name" value="PROTEIN_KINASE_ST"/>
    <property type="match status" value="1"/>
</dbReference>
<name>PK1_CAEEL</name>
<gene>
    <name type="primary">pak-1</name>
    <name type="ORF">C09B8.7</name>
</gene>
<sequence>MKAFSSYDEKPPAPPIRFSSSATRENQVVGLKPLPKEPEATKKKKTMPNPFMKKNKDKKEASEKPVISRPSNFEHTIHVGYDPKTGEFTGMPEAWARLLTDSQISKQEQQQNPQAVLDALKYYTQGESSGQKWLQYDMMFIDDAPSRTPSYGLKPQPYSTSSLPYHGNKIQDPRKMNPMTTSTSSAGYNSKQGVPPTTFSVNENRSSMPPSYAPPPVPHGETPADIVPPAIPDRPARTLSIYTKPKEEEEKIPDLSKGQFGVQARGQKAKKKMTDAEVLTKLRTIVSIGNPDRKYRKVDKIGSGASGSVYTAIEISTEAEVAIKQMNLKDQPKKELIINEILVMRENKHANIVNYLDSYLVCDELWVVMEYLAGGSLTDVVTECQMEDGIIAAVCREVLQALEFLHSRHVIHRDIKSDNILLGMDGSVKLTDFGFCAQLSPEQRKRTTMVGTPYWMAPEVVTRKQYGPKVDVWSLGIMAIEMVEGEPPYLNENPLRAIYLIATNGKPDFPGRDSMTLLFKDFVDSALEVQVENRWSASQLLTHPFLRCAKPLASLYYLIVAAKKSIAEASNS</sequence>
<keyword id="KW-0025">Alternative splicing</keyword>
<keyword id="KW-0067">ATP-binding</keyword>
<keyword id="KW-1003">Cell membrane</keyword>
<keyword id="KW-0966">Cell projection</keyword>
<keyword id="KW-0963">Cytoplasm</keyword>
<keyword id="KW-0217">Developmental protein</keyword>
<keyword id="KW-0418">Kinase</keyword>
<keyword id="KW-0460">Magnesium</keyword>
<keyword id="KW-0464">Manganese</keyword>
<keyword id="KW-0472">Membrane</keyword>
<keyword id="KW-0524">Neurogenesis</keyword>
<keyword id="KW-0547">Nucleotide-binding</keyword>
<keyword id="KW-1185">Reference proteome</keyword>
<keyword id="KW-0723">Serine/threonine-protein kinase</keyword>
<keyword id="KW-0808">Transferase</keyword>
<proteinExistence type="evidence at protein level"/>
<evidence type="ECO:0000250" key="1">
    <source>
        <dbReference type="UniProtKB" id="Q13153"/>
    </source>
</evidence>
<evidence type="ECO:0000255" key="2">
    <source>
        <dbReference type="PROSITE-ProRule" id="PRU00057"/>
    </source>
</evidence>
<evidence type="ECO:0000255" key="3">
    <source>
        <dbReference type="PROSITE-ProRule" id="PRU00159"/>
    </source>
</evidence>
<evidence type="ECO:0000255" key="4">
    <source>
        <dbReference type="PROSITE-ProRule" id="PRU10027"/>
    </source>
</evidence>
<evidence type="ECO:0000256" key="5">
    <source>
        <dbReference type="SAM" id="MobiDB-lite"/>
    </source>
</evidence>
<evidence type="ECO:0000269" key="6">
    <source>
    </source>
</evidence>
<evidence type="ECO:0000269" key="7">
    <source>
    </source>
</evidence>
<evidence type="ECO:0000269" key="8">
    <source>
    </source>
</evidence>
<evidence type="ECO:0000269" key="9">
    <source>
    </source>
</evidence>
<evidence type="ECO:0000269" key="10">
    <source>
    </source>
</evidence>
<evidence type="ECO:0000269" key="11">
    <source>
    </source>
</evidence>
<evidence type="ECO:0000303" key="12">
    <source>
    </source>
</evidence>
<evidence type="ECO:0000305" key="13"/>
<evidence type="ECO:0000305" key="14">
    <source>
    </source>
</evidence>
<evidence type="ECO:0000312" key="15">
    <source>
        <dbReference type="EMBL" id="AAC47308.1"/>
    </source>
</evidence>
<evidence type="ECO:0000312" key="16">
    <source>
        <dbReference type="EMBL" id="BAA11844.1"/>
    </source>
</evidence>
<organism>
    <name type="scientific">Caenorhabditis elegans</name>
    <dbReference type="NCBI Taxonomy" id="6239"/>
    <lineage>
        <taxon>Eukaryota</taxon>
        <taxon>Metazoa</taxon>
        <taxon>Ecdysozoa</taxon>
        <taxon>Nematoda</taxon>
        <taxon>Chromadorea</taxon>
        <taxon>Rhabditida</taxon>
        <taxon>Rhabditina</taxon>
        <taxon>Rhabditomorpha</taxon>
        <taxon>Rhabditoidea</taxon>
        <taxon>Rhabditidae</taxon>
        <taxon>Peloderinae</taxon>
        <taxon>Caenorhabditis</taxon>
    </lineage>
</organism>
<accession>Q17850</accession>
<accession>Q22041</accession>
<accession>Q86GT8</accession>
<accession>Q86GT9</accession>
<accession>Q86GU0</accession>
<accession>Q94133</accession>